<protein>
    <recommendedName>
        <fullName evidence="1">Serine hydroxymethyltransferase</fullName>
        <shortName evidence="1">SHMT</shortName>
        <shortName evidence="1">Serine methylase</shortName>
        <ecNumber evidence="1">2.1.2.1</ecNumber>
    </recommendedName>
</protein>
<name>GLYA_CALS4</name>
<gene>
    <name evidence="1" type="primary">glyA</name>
    <name type="ordered locus">TTE2130</name>
</gene>
<proteinExistence type="inferred from homology"/>
<accession>Q8R887</accession>
<reference key="1">
    <citation type="journal article" date="2002" name="Genome Res.">
        <title>A complete sequence of the T. tengcongensis genome.</title>
        <authorList>
            <person name="Bao Q."/>
            <person name="Tian Y."/>
            <person name="Li W."/>
            <person name="Xu Z."/>
            <person name="Xuan Z."/>
            <person name="Hu S."/>
            <person name="Dong W."/>
            <person name="Yang J."/>
            <person name="Chen Y."/>
            <person name="Xue Y."/>
            <person name="Xu Y."/>
            <person name="Lai X."/>
            <person name="Huang L."/>
            <person name="Dong X."/>
            <person name="Ma Y."/>
            <person name="Ling L."/>
            <person name="Tan H."/>
            <person name="Chen R."/>
            <person name="Wang J."/>
            <person name="Yu J."/>
            <person name="Yang H."/>
        </authorList>
    </citation>
    <scope>NUCLEOTIDE SEQUENCE [LARGE SCALE GENOMIC DNA]</scope>
    <source>
        <strain>DSM 15242 / JCM 11007 / NBRC 100824 / MB4</strain>
    </source>
</reference>
<sequence length="413" mass="45552">MDIEIIRKTDPEIAEVILKELNRQRNKIELIASENFVSRAVMEAMGTPLTNKYAEGYPGRRYYGGCEYVDMAEELARERLKKLFGAEHANVQPHSGAQANMAAYFALLKPGDTVLGMDLAHGGHLTHGSKVNFSGQIYNFVSYGVREDTGYIDYDQVEDLAKKHKPKLIVAGASAYPRIIDFKKFREIADKVGAYLMVDMAHIAGLVAAGLHPNPVPYADVVTTTTHKTLRGPRGGAILCKQEHAKAIDKALFPGTQGGPLMHIIAAKAVCFKEALSDEFKEYQKRIVENAKALANALMERGINLVSGGTDNHLMLLDLRNTGITGKELETRLDEVNITCNKNAIPFDPLGPNVTSGVRLGTPAVTTRGMKPEDMVEIADIIANMIKDENYKEKAKERVAKLLEKYPLYPDLL</sequence>
<feature type="chain" id="PRO_0000113686" description="Serine hydroxymethyltransferase">
    <location>
        <begin position="1"/>
        <end position="413"/>
    </location>
</feature>
<feature type="binding site" evidence="1">
    <location>
        <position position="119"/>
    </location>
    <ligand>
        <name>(6S)-5,6,7,8-tetrahydrofolate</name>
        <dbReference type="ChEBI" id="CHEBI:57453"/>
    </ligand>
</feature>
<feature type="binding site" evidence="1">
    <location>
        <begin position="123"/>
        <end position="125"/>
    </location>
    <ligand>
        <name>(6S)-5,6,7,8-tetrahydrofolate</name>
        <dbReference type="ChEBI" id="CHEBI:57453"/>
    </ligand>
</feature>
<feature type="site" description="Plays an important role in substrate specificity" evidence="1">
    <location>
        <position position="227"/>
    </location>
</feature>
<feature type="modified residue" description="N6-(pyridoxal phosphate)lysine" evidence="1">
    <location>
        <position position="228"/>
    </location>
</feature>
<comment type="function">
    <text evidence="1">Catalyzes the reversible interconversion of serine and glycine with tetrahydrofolate (THF) serving as the one-carbon carrier. This reaction serves as the major source of one-carbon groups required for the biosynthesis of purines, thymidylate, methionine, and other important biomolecules. Also exhibits THF-independent aldolase activity toward beta-hydroxyamino acids, producing glycine and aldehydes, via a retro-aldol mechanism.</text>
</comment>
<comment type="catalytic activity">
    <reaction evidence="1">
        <text>(6R)-5,10-methylene-5,6,7,8-tetrahydrofolate + glycine + H2O = (6S)-5,6,7,8-tetrahydrofolate + L-serine</text>
        <dbReference type="Rhea" id="RHEA:15481"/>
        <dbReference type="ChEBI" id="CHEBI:15377"/>
        <dbReference type="ChEBI" id="CHEBI:15636"/>
        <dbReference type="ChEBI" id="CHEBI:33384"/>
        <dbReference type="ChEBI" id="CHEBI:57305"/>
        <dbReference type="ChEBI" id="CHEBI:57453"/>
        <dbReference type="EC" id="2.1.2.1"/>
    </reaction>
</comment>
<comment type="cofactor">
    <cofactor evidence="1">
        <name>pyridoxal 5'-phosphate</name>
        <dbReference type="ChEBI" id="CHEBI:597326"/>
    </cofactor>
</comment>
<comment type="pathway">
    <text evidence="1">One-carbon metabolism; tetrahydrofolate interconversion.</text>
</comment>
<comment type="pathway">
    <text evidence="1">Amino-acid biosynthesis; glycine biosynthesis; glycine from L-serine: step 1/1.</text>
</comment>
<comment type="subunit">
    <text evidence="1">Homodimer.</text>
</comment>
<comment type="subcellular location">
    <subcellularLocation>
        <location evidence="1">Cytoplasm</location>
    </subcellularLocation>
</comment>
<comment type="similarity">
    <text evidence="1">Belongs to the SHMT family.</text>
</comment>
<organism>
    <name type="scientific">Caldanaerobacter subterraneus subsp. tengcongensis (strain DSM 15242 / JCM 11007 / NBRC 100824 / MB4)</name>
    <name type="common">Thermoanaerobacter tengcongensis</name>
    <dbReference type="NCBI Taxonomy" id="273068"/>
    <lineage>
        <taxon>Bacteria</taxon>
        <taxon>Bacillati</taxon>
        <taxon>Bacillota</taxon>
        <taxon>Clostridia</taxon>
        <taxon>Thermoanaerobacterales</taxon>
        <taxon>Thermoanaerobacteraceae</taxon>
        <taxon>Caldanaerobacter</taxon>
    </lineage>
</organism>
<evidence type="ECO:0000255" key="1">
    <source>
        <dbReference type="HAMAP-Rule" id="MF_00051"/>
    </source>
</evidence>
<keyword id="KW-0028">Amino-acid biosynthesis</keyword>
<keyword id="KW-0963">Cytoplasm</keyword>
<keyword id="KW-0554">One-carbon metabolism</keyword>
<keyword id="KW-0663">Pyridoxal phosphate</keyword>
<keyword id="KW-1185">Reference proteome</keyword>
<keyword id="KW-0808">Transferase</keyword>
<dbReference type="EC" id="2.1.2.1" evidence="1"/>
<dbReference type="EMBL" id="AE008691">
    <property type="protein sequence ID" value="AAM25295.1"/>
    <property type="molecule type" value="Genomic_DNA"/>
</dbReference>
<dbReference type="RefSeq" id="WP_009610753.1">
    <property type="nucleotide sequence ID" value="NC_003869.1"/>
</dbReference>
<dbReference type="SMR" id="Q8R887"/>
<dbReference type="STRING" id="273068.TTE2130"/>
<dbReference type="KEGG" id="tte:TTE2130"/>
<dbReference type="eggNOG" id="COG0112">
    <property type="taxonomic scope" value="Bacteria"/>
</dbReference>
<dbReference type="HOGENOM" id="CLU_022477_2_1_9"/>
<dbReference type="OrthoDB" id="9803846at2"/>
<dbReference type="UniPathway" id="UPA00193"/>
<dbReference type="UniPathway" id="UPA00288">
    <property type="reaction ID" value="UER01023"/>
</dbReference>
<dbReference type="Proteomes" id="UP000000555">
    <property type="component" value="Chromosome"/>
</dbReference>
<dbReference type="GO" id="GO:0005829">
    <property type="term" value="C:cytosol"/>
    <property type="evidence" value="ECO:0007669"/>
    <property type="project" value="TreeGrafter"/>
</dbReference>
<dbReference type="GO" id="GO:0004372">
    <property type="term" value="F:glycine hydroxymethyltransferase activity"/>
    <property type="evidence" value="ECO:0007669"/>
    <property type="project" value="UniProtKB-UniRule"/>
</dbReference>
<dbReference type="GO" id="GO:0030170">
    <property type="term" value="F:pyridoxal phosphate binding"/>
    <property type="evidence" value="ECO:0007669"/>
    <property type="project" value="UniProtKB-UniRule"/>
</dbReference>
<dbReference type="GO" id="GO:0019264">
    <property type="term" value="P:glycine biosynthetic process from serine"/>
    <property type="evidence" value="ECO:0007669"/>
    <property type="project" value="UniProtKB-UniRule"/>
</dbReference>
<dbReference type="GO" id="GO:0035999">
    <property type="term" value="P:tetrahydrofolate interconversion"/>
    <property type="evidence" value="ECO:0007669"/>
    <property type="project" value="UniProtKB-UniRule"/>
</dbReference>
<dbReference type="CDD" id="cd00378">
    <property type="entry name" value="SHMT"/>
    <property type="match status" value="1"/>
</dbReference>
<dbReference type="FunFam" id="3.40.640.10:FF:000001">
    <property type="entry name" value="Serine hydroxymethyltransferase"/>
    <property type="match status" value="1"/>
</dbReference>
<dbReference type="FunFam" id="3.90.1150.10:FF:000003">
    <property type="entry name" value="Serine hydroxymethyltransferase"/>
    <property type="match status" value="1"/>
</dbReference>
<dbReference type="Gene3D" id="3.90.1150.10">
    <property type="entry name" value="Aspartate Aminotransferase, domain 1"/>
    <property type="match status" value="1"/>
</dbReference>
<dbReference type="Gene3D" id="3.40.640.10">
    <property type="entry name" value="Type I PLP-dependent aspartate aminotransferase-like (Major domain)"/>
    <property type="match status" value="1"/>
</dbReference>
<dbReference type="HAMAP" id="MF_00051">
    <property type="entry name" value="SHMT"/>
    <property type="match status" value="1"/>
</dbReference>
<dbReference type="InterPro" id="IPR015424">
    <property type="entry name" value="PyrdxlP-dep_Trfase"/>
</dbReference>
<dbReference type="InterPro" id="IPR015421">
    <property type="entry name" value="PyrdxlP-dep_Trfase_major"/>
</dbReference>
<dbReference type="InterPro" id="IPR015422">
    <property type="entry name" value="PyrdxlP-dep_Trfase_small"/>
</dbReference>
<dbReference type="InterPro" id="IPR001085">
    <property type="entry name" value="Ser_HO-MeTrfase"/>
</dbReference>
<dbReference type="InterPro" id="IPR049943">
    <property type="entry name" value="Ser_HO-MeTrfase-like"/>
</dbReference>
<dbReference type="InterPro" id="IPR019798">
    <property type="entry name" value="Ser_HO-MeTrfase_PLP_BS"/>
</dbReference>
<dbReference type="InterPro" id="IPR039429">
    <property type="entry name" value="SHMT-like_dom"/>
</dbReference>
<dbReference type="NCBIfam" id="NF000586">
    <property type="entry name" value="PRK00011.1"/>
    <property type="match status" value="1"/>
</dbReference>
<dbReference type="PANTHER" id="PTHR11680">
    <property type="entry name" value="SERINE HYDROXYMETHYLTRANSFERASE"/>
    <property type="match status" value="1"/>
</dbReference>
<dbReference type="PANTHER" id="PTHR11680:SF35">
    <property type="entry name" value="SERINE HYDROXYMETHYLTRANSFERASE 1"/>
    <property type="match status" value="1"/>
</dbReference>
<dbReference type="Pfam" id="PF00464">
    <property type="entry name" value="SHMT"/>
    <property type="match status" value="1"/>
</dbReference>
<dbReference type="PIRSF" id="PIRSF000412">
    <property type="entry name" value="SHMT"/>
    <property type="match status" value="1"/>
</dbReference>
<dbReference type="SUPFAM" id="SSF53383">
    <property type="entry name" value="PLP-dependent transferases"/>
    <property type="match status" value="1"/>
</dbReference>
<dbReference type="PROSITE" id="PS00096">
    <property type="entry name" value="SHMT"/>
    <property type="match status" value="1"/>
</dbReference>